<name>VE6_HPV56</name>
<proteinExistence type="inferred from homology"/>
<keyword id="KW-0010">Activator</keyword>
<keyword id="KW-0238">DNA-binding</keyword>
<keyword id="KW-0244">Early protein</keyword>
<keyword id="KW-1035">Host cytoplasm</keyword>
<keyword id="KW-1048">Host nucleus</keyword>
<keyword id="KW-0945">Host-virus interaction</keyword>
<keyword id="KW-1090">Inhibition of host innate immune response by virus</keyword>
<keyword id="KW-0479">Metal-binding</keyword>
<keyword id="KW-1119">Modulation of host cell apoptosis by virus</keyword>
<keyword id="KW-1185">Reference proteome</keyword>
<keyword id="KW-0804">Transcription</keyword>
<keyword id="KW-0805">Transcription regulation</keyword>
<keyword id="KW-0899">Viral immunoevasion</keyword>
<keyword id="KW-0862">Zinc</keyword>
<keyword id="KW-0863">Zinc-finger</keyword>
<accession>P24836</accession>
<dbReference type="EMBL" id="X74483">
    <property type="protein sequence ID" value="CAA52596.1"/>
    <property type="molecule type" value="Genomic_DNA"/>
</dbReference>
<dbReference type="PIR" id="A33377">
    <property type="entry name" value="W6WL56"/>
</dbReference>
<dbReference type="SMR" id="P24836"/>
<dbReference type="Proteomes" id="UP000007666">
    <property type="component" value="Segment"/>
</dbReference>
<dbReference type="GO" id="GO:0030430">
    <property type="term" value="C:host cell cytoplasm"/>
    <property type="evidence" value="ECO:0007669"/>
    <property type="project" value="UniProtKB-SubCell"/>
</dbReference>
<dbReference type="GO" id="GO:0042025">
    <property type="term" value="C:host cell nucleus"/>
    <property type="evidence" value="ECO:0007669"/>
    <property type="project" value="UniProtKB-SubCell"/>
</dbReference>
<dbReference type="GO" id="GO:0003677">
    <property type="term" value="F:DNA binding"/>
    <property type="evidence" value="ECO:0007669"/>
    <property type="project" value="UniProtKB-UniRule"/>
</dbReference>
<dbReference type="GO" id="GO:0008270">
    <property type="term" value="F:zinc ion binding"/>
    <property type="evidence" value="ECO:0007669"/>
    <property type="project" value="UniProtKB-KW"/>
</dbReference>
<dbReference type="GO" id="GO:0006351">
    <property type="term" value="P:DNA-templated transcription"/>
    <property type="evidence" value="ECO:0007669"/>
    <property type="project" value="UniProtKB-UniRule"/>
</dbReference>
<dbReference type="GO" id="GO:0006355">
    <property type="term" value="P:regulation of DNA-templated transcription"/>
    <property type="evidence" value="ECO:0007669"/>
    <property type="project" value="UniProtKB-UniRule"/>
</dbReference>
<dbReference type="GO" id="GO:0052150">
    <property type="term" value="P:symbiont-mediated perturbation of host apoptosis"/>
    <property type="evidence" value="ECO:0007669"/>
    <property type="project" value="UniProtKB-KW"/>
</dbReference>
<dbReference type="GO" id="GO:0039648">
    <property type="term" value="P:symbiont-mediated perturbation of host ubiquitin-like protein modification"/>
    <property type="evidence" value="ECO:0007669"/>
    <property type="project" value="UniProtKB-UniRule"/>
</dbReference>
<dbReference type="GO" id="GO:0052170">
    <property type="term" value="P:symbiont-mediated suppression of host innate immune response"/>
    <property type="evidence" value="ECO:0007669"/>
    <property type="project" value="UniProtKB-KW"/>
</dbReference>
<dbReference type="GO" id="GO:0039502">
    <property type="term" value="P:symbiont-mediated suppression of host type I interferon-mediated signaling pathway"/>
    <property type="evidence" value="ECO:0007669"/>
    <property type="project" value="UniProtKB-UniRule"/>
</dbReference>
<dbReference type="Gene3D" id="3.30.240.40">
    <property type="entry name" value="E6 early regulatory protein"/>
    <property type="match status" value="2"/>
</dbReference>
<dbReference type="HAMAP" id="MF_04006">
    <property type="entry name" value="HPV_E6"/>
    <property type="match status" value="1"/>
</dbReference>
<dbReference type="InterPro" id="IPR001334">
    <property type="entry name" value="E6"/>
</dbReference>
<dbReference type="InterPro" id="IPR038575">
    <property type="entry name" value="E6_sf"/>
</dbReference>
<dbReference type="Pfam" id="PF00518">
    <property type="entry name" value="E6"/>
    <property type="match status" value="1"/>
</dbReference>
<dbReference type="SUPFAM" id="SSF161229">
    <property type="entry name" value="E6 C-terminal domain-like"/>
    <property type="match status" value="2"/>
</dbReference>
<comment type="function">
    <text>This protein has transforming activity in vitro.</text>
</comment>
<comment type="function">
    <text evidence="1">Plays a major role in the induction and maintenance of cellular transformation. E6 associates with host UBE3A/E6-AP ubiquitin-protein ligase and modulates its activity. Sequesters tumor suppressor TP53 in the host cytoplasm and modulates its activity by interacting with host EP300 that results in the reduction of TP53 acetylation and activation. In turn, apoptosis induced by DNA damage is inhibited. E6 also protects host keratinocytes from apoptosis by mediating the degradation of host BAK1. May also inhibit host immune response.</text>
</comment>
<comment type="subunit">
    <text evidence="1">Forms homodimers. Interacts with ubiquitin-protein ligase UBE3A/E6-AP; this interaction stimulates UBE3A ubiquitin activity. Interacts with host TP53 and EP300; this interaction inhibits TP53 activity.</text>
</comment>
<comment type="subcellular location">
    <subcellularLocation>
        <location evidence="1">Host cytoplasm</location>
    </subcellularLocation>
    <subcellularLocation>
        <location evidence="1">Host nucleus</location>
    </subcellularLocation>
</comment>
<comment type="miscellaneous">
    <text evidence="1">Belongs to the low risk human alphapapillomavirus family. The cancer-causing human papillomavirus E6 protein has a unique carboxy terminal PDZ domain containing substrate but low risk E6s do not possess this domain.</text>
</comment>
<comment type="similarity">
    <text evidence="2">Belongs to the papillomaviridae E6 protein family.</text>
</comment>
<sequence length="155" mass="18524">MEPQFNNPQERPRSLHHLSEVLEIPLIDLRLSCVYCKKELTRAEVYNFACTELKLVYRDDFPYAVCRVCLLFYSKVRKYRYYDYSVYGATLESITKKQLCDLLIRCYRCQSPLTPEEKQLHCDRKRRFHLIAHGWTGSCLGCWRQTSREPRESTV</sequence>
<organism>
    <name type="scientific">Human papillomavirus 56</name>
    <dbReference type="NCBI Taxonomy" id="10596"/>
    <lineage>
        <taxon>Viruses</taxon>
        <taxon>Monodnaviria</taxon>
        <taxon>Shotokuvirae</taxon>
        <taxon>Cossaviricota</taxon>
        <taxon>Papovaviricetes</taxon>
        <taxon>Zurhausenvirales</taxon>
        <taxon>Papillomaviridae</taxon>
        <taxon>Firstpapillomavirinae</taxon>
        <taxon>Alphapapillomavirus</taxon>
        <taxon>Alphapapillomavirus 6</taxon>
    </lineage>
</organism>
<organismHost>
    <name type="scientific">Homo sapiens</name>
    <name type="common">Human</name>
    <dbReference type="NCBI Taxonomy" id="9606"/>
</organismHost>
<feature type="chain" id="PRO_0000133372" description="Protein E6">
    <location>
        <begin position="1"/>
        <end position="155"/>
    </location>
</feature>
<feature type="zinc finger region" evidence="1">
    <location>
        <begin position="33"/>
        <end position="69"/>
    </location>
</feature>
<feature type="zinc finger region" evidence="1">
    <location>
        <begin position="106"/>
        <end position="142"/>
    </location>
</feature>
<gene>
    <name evidence="1" type="primary">E6</name>
</gene>
<reference key="1">
    <citation type="journal article" date="1989" name="J. Gen. Virol.">
        <title>Human papillomavirus type 56: a new virus detected in cervical cancers.</title>
        <authorList>
            <person name="Loerincz A.T."/>
            <person name="Quinn A.P."/>
            <person name="Goldsborough M.D."/>
            <person name="McAllister P."/>
            <person name="Temple G.F."/>
        </authorList>
    </citation>
    <scope>NUCLEOTIDE SEQUENCE [GENOMIC DNA]</scope>
</reference>
<reference key="2">
    <citation type="journal article" date="1994" name="Curr. Top. Microbiol. Immunol.">
        <title>Primer-directed sequencing of human papillomavirus types.</title>
        <authorList>
            <person name="Delius H."/>
            <person name="Hofmann B."/>
        </authorList>
    </citation>
    <scope>NUCLEOTIDE SEQUENCE [GENOMIC DNA]</scope>
</reference>
<evidence type="ECO:0000255" key="1">
    <source>
        <dbReference type="HAMAP-Rule" id="MF_04006"/>
    </source>
</evidence>
<evidence type="ECO:0000305" key="2"/>
<protein>
    <recommendedName>
        <fullName evidence="1">Protein E6</fullName>
    </recommendedName>
</protein>